<accession>Q6HCM2</accession>
<sequence length="200" mass="22996">MARYTGPAWKLSRRLGISLSGTGKELEKRPYAPGPHGPNQRKKLSEYGLQLQEKQKLRHMYGMTERQFRRTFDQAGKMPGKHGENFMILLEARLDNLVYRMGLARTRRAARQLVNHGHIMVDGARVDIPSYRVKPGQTISVREKSNNLVVVKEAIEVNNFVPEYLTFDADKLEATYTRHAERAELPAEINEALIVEFYSR</sequence>
<comment type="function">
    <text evidence="1">One of the primary rRNA binding proteins, it binds directly to 16S rRNA where it nucleates assembly of the body of the 30S subunit.</text>
</comment>
<comment type="function">
    <text evidence="1">With S5 and S12 plays an important role in translational accuracy.</text>
</comment>
<comment type="subunit">
    <text evidence="1">Part of the 30S ribosomal subunit. Contacts protein S5. The interaction surface between S4 and S5 is involved in control of translational fidelity.</text>
</comment>
<comment type="similarity">
    <text evidence="1">Belongs to the universal ribosomal protein uS4 family.</text>
</comment>
<gene>
    <name evidence="1" type="primary">rpsD</name>
    <name type="ordered locus">BT9727_4389</name>
</gene>
<evidence type="ECO:0000255" key="1">
    <source>
        <dbReference type="HAMAP-Rule" id="MF_01306"/>
    </source>
</evidence>
<evidence type="ECO:0000256" key="2">
    <source>
        <dbReference type="SAM" id="MobiDB-lite"/>
    </source>
</evidence>
<evidence type="ECO:0000305" key="3"/>
<keyword id="KW-0687">Ribonucleoprotein</keyword>
<keyword id="KW-0689">Ribosomal protein</keyword>
<keyword id="KW-0694">RNA-binding</keyword>
<keyword id="KW-0699">rRNA-binding</keyword>
<protein>
    <recommendedName>
        <fullName evidence="1">Small ribosomal subunit protein uS4</fullName>
    </recommendedName>
    <alternativeName>
        <fullName evidence="3">30S ribosomal protein S4</fullName>
    </alternativeName>
</protein>
<organism>
    <name type="scientific">Bacillus thuringiensis subsp. konkukian (strain 97-27)</name>
    <dbReference type="NCBI Taxonomy" id="281309"/>
    <lineage>
        <taxon>Bacteria</taxon>
        <taxon>Bacillati</taxon>
        <taxon>Bacillota</taxon>
        <taxon>Bacilli</taxon>
        <taxon>Bacillales</taxon>
        <taxon>Bacillaceae</taxon>
        <taxon>Bacillus</taxon>
        <taxon>Bacillus cereus group</taxon>
    </lineage>
</organism>
<proteinExistence type="inferred from homology"/>
<name>RS4_BACHK</name>
<dbReference type="EMBL" id="AE017355">
    <property type="protein sequence ID" value="AAT63611.1"/>
    <property type="molecule type" value="Genomic_DNA"/>
</dbReference>
<dbReference type="RefSeq" id="WP_000135311.1">
    <property type="nucleotide sequence ID" value="NC_005957.1"/>
</dbReference>
<dbReference type="RefSeq" id="YP_038704.1">
    <property type="nucleotide sequence ID" value="NC_005957.1"/>
</dbReference>
<dbReference type="SMR" id="Q6HCM2"/>
<dbReference type="GeneID" id="83638371"/>
<dbReference type="KEGG" id="btk:BT9727_4389"/>
<dbReference type="PATRIC" id="fig|281309.8.peg.4677"/>
<dbReference type="HOGENOM" id="CLU_092403_0_1_9"/>
<dbReference type="Proteomes" id="UP000001301">
    <property type="component" value="Chromosome"/>
</dbReference>
<dbReference type="GO" id="GO:0015935">
    <property type="term" value="C:small ribosomal subunit"/>
    <property type="evidence" value="ECO:0007669"/>
    <property type="project" value="InterPro"/>
</dbReference>
<dbReference type="GO" id="GO:0019843">
    <property type="term" value="F:rRNA binding"/>
    <property type="evidence" value="ECO:0007669"/>
    <property type="project" value="UniProtKB-UniRule"/>
</dbReference>
<dbReference type="GO" id="GO:0003735">
    <property type="term" value="F:structural constituent of ribosome"/>
    <property type="evidence" value="ECO:0007669"/>
    <property type="project" value="InterPro"/>
</dbReference>
<dbReference type="GO" id="GO:0042274">
    <property type="term" value="P:ribosomal small subunit biogenesis"/>
    <property type="evidence" value="ECO:0007669"/>
    <property type="project" value="TreeGrafter"/>
</dbReference>
<dbReference type="GO" id="GO:0006412">
    <property type="term" value="P:translation"/>
    <property type="evidence" value="ECO:0007669"/>
    <property type="project" value="UniProtKB-UniRule"/>
</dbReference>
<dbReference type="CDD" id="cd00165">
    <property type="entry name" value="S4"/>
    <property type="match status" value="1"/>
</dbReference>
<dbReference type="FunFam" id="1.10.1050.10:FF:000001">
    <property type="entry name" value="30S ribosomal protein S4"/>
    <property type="match status" value="1"/>
</dbReference>
<dbReference type="FunFam" id="3.10.290.10:FF:000001">
    <property type="entry name" value="30S ribosomal protein S4"/>
    <property type="match status" value="1"/>
</dbReference>
<dbReference type="Gene3D" id="1.10.1050.10">
    <property type="entry name" value="Ribosomal Protein S4 Delta 41, Chain A, domain 1"/>
    <property type="match status" value="1"/>
</dbReference>
<dbReference type="Gene3D" id="3.10.290.10">
    <property type="entry name" value="RNA-binding S4 domain"/>
    <property type="match status" value="1"/>
</dbReference>
<dbReference type="HAMAP" id="MF_01306_B">
    <property type="entry name" value="Ribosomal_uS4_B"/>
    <property type="match status" value="1"/>
</dbReference>
<dbReference type="InterPro" id="IPR022801">
    <property type="entry name" value="Ribosomal_uS4"/>
</dbReference>
<dbReference type="InterPro" id="IPR005709">
    <property type="entry name" value="Ribosomal_uS4_bac-type"/>
</dbReference>
<dbReference type="InterPro" id="IPR018079">
    <property type="entry name" value="Ribosomal_uS4_CS"/>
</dbReference>
<dbReference type="InterPro" id="IPR001912">
    <property type="entry name" value="Ribosomal_uS4_N"/>
</dbReference>
<dbReference type="InterPro" id="IPR002942">
    <property type="entry name" value="S4_RNA-bd"/>
</dbReference>
<dbReference type="InterPro" id="IPR036986">
    <property type="entry name" value="S4_RNA-bd_sf"/>
</dbReference>
<dbReference type="NCBIfam" id="NF003717">
    <property type="entry name" value="PRK05327.1"/>
    <property type="match status" value="1"/>
</dbReference>
<dbReference type="NCBIfam" id="TIGR01017">
    <property type="entry name" value="rpsD_bact"/>
    <property type="match status" value="1"/>
</dbReference>
<dbReference type="PANTHER" id="PTHR11831">
    <property type="entry name" value="30S 40S RIBOSOMAL PROTEIN"/>
    <property type="match status" value="1"/>
</dbReference>
<dbReference type="PANTHER" id="PTHR11831:SF4">
    <property type="entry name" value="SMALL RIBOSOMAL SUBUNIT PROTEIN US4M"/>
    <property type="match status" value="1"/>
</dbReference>
<dbReference type="Pfam" id="PF00163">
    <property type="entry name" value="Ribosomal_S4"/>
    <property type="match status" value="1"/>
</dbReference>
<dbReference type="Pfam" id="PF01479">
    <property type="entry name" value="S4"/>
    <property type="match status" value="1"/>
</dbReference>
<dbReference type="SMART" id="SM01390">
    <property type="entry name" value="Ribosomal_S4"/>
    <property type="match status" value="1"/>
</dbReference>
<dbReference type="SMART" id="SM00363">
    <property type="entry name" value="S4"/>
    <property type="match status" value="1"/>
</dbReference>
<dbReference type="SUPFAM" id="SSF55174">
    <property type="entry name" value="Alpha-L RNA-binding motif"/>
    <property type="match status" value="1"/>
</dbReference>
<dbReference type="PROSITE" id="PS00632">
    <property type="entry name" value="RIBOSOMAL_S4"/>
    <property type="match status" value="1"/>
</dbReference>
<dbReference type="PROSITE" id="PS50889">
    <property type="entry name" value="S4"/>
    <property type="match status" value="1"/>
</dbReference>
<feature type="chain" id="PRO_0000132336" description="Small ribosomal subunit protein uS4">
    <location>
        <begin position="1"/>
        <end position="200"/>
    </location>
</feature>
<feature type="domain" description="S4 RNA-binding" evidence="1">
    <location>
        <begin position="92"/>
        <end position="152"/>
    </location>
</feature>
<feature type="region of interest" description="Disordered" evidence="2">
    <location>
        <begin position="22"/>
        <end position="42"/>
    </location>
</feature>
<reference key="1">
    <citation type="journal article" date="2006" name="J. Bacteriol.">
        <title>Pathogenomic sequence analysis of Bacillus cereus and Bacillus thuringiensis isolates closely related to Bacillus anthracis.</title>
        <authorList>
            <person name="Han C.S."/>
            <person name="Xie G."/>
            <person name="Challacombe J.F."/>
            <person name="Altherr M.R."/>
            <person name="Bhotika S.S."/>
            <person name="Bruce D."/>
            <person name="Campbell C.S."/>
            <person name="Campbell M.L."/>
            <person name="Chen J."/>
            <person name="Chertkov O."/>
            <person name="Cleland C."/>
            <person name="Dimitrijevic M."/>
            <person name="Doggett N.A."/>
            <person name="Fawcett J.J."/>
            <person name="Glavina T."/>
            <person name="Goodwin L.A."/>
            <person name="Hill K.K."/>
            <person name="Hitchcock P."/>
            <person name="Jackson P.J."/>
            <person name="Keim P."/>
            <person name="Kewalramani A.R."/>
            <person name="Longmire J."/>
            <person name="Lucas S."/>
            <person name="Malfatti S."/>
            <person name="McMurry K."/>
            <person name="Meincke L.J."/>
            <person name="Misra M."/>
            <person name="Moseman B.L."/>
            <person name="Mundt M."/>
            <person name="Munk A.C."/>
            <person name="Okinaka R.T."/>
            <person name="Parson-Quintana B."/>
            <person name="Reilly L.P."/>
            <person name="Richardson P."/>
            <person name="Robinson D.L."/>
            <person name="Rubin E."/>
            <person name="Saunders E."/>
            <person name="Tapia R."/>
            <person name="Tesmer J.G."/>
            <person name="Thayer N."/>
            <person name="Thompson L.S."/>
            <person name="Tice H."/>
            <person name="Ticknor L.O."/>
            <person name="Wills P.L."/>
            <person name="Brettin T.S."/>
            <person name="Gilna P."/>
        </authorList>
    </citation>
    <scope>NUCLEOTIDE SEQUENCE [LARGE SCALE GENOMIC DNA]</scope>
    <source>
        <strain>97-27</strain>
    </source>
</reference>